<sequence>MFNTHKVEIEWGGRPLTLETGKIARQADGAVLATYGETAVLATVVSAKEPKPGQDFFPLTVNYQEKTYAAGKIPGGYFKREGRPSENETLVSRLIDRPIRPLFVDGYKNDTQVVITVLQHDLENNPDILSMVAASAALTISGVPFMGPISGARVGYIDGEYVLNPNIDEMPESKLDLVVAGTSEAVLMVESEAQELPEDVMLGAVMFGHKSFQPVIDAIIKLAEVAAKEPRDFQPEDLSELEAKVLAVVENDLREAYKITEKQARYAAVDAAKAKAEEHFFPEGVEETEMSAEQFATIFKHLQAKIVRWNILDTGNRIDGRDLSTVRPIVSEVGILPRTHGSALFTRGETQAIVVATLGTGEDEQMIDALTGTYKESFMLHYNFPPYSVGETGRMGSPGRREIGHGKLAWRAIHPMLPAAEQFPYTIRAVSEITESNGSSSMATVCGTSLALMDAGVPIVRPVAGIAMGLIKEGERFAVLSDILGDEDHLGDMDFKVAGTEFGITSLQMDIKIDGITEEIMKVALEQAKGGRVHILGEMAKAISSSRAELGEFAPRIEVMNIPTDKIRDVIGSGGKVIREIVEKTGAKINIEDDGTVKIASSNGKEIEAAKKWIHSIVAEPEVGEIYEGTVVKTADFGAFVNFFGPRDGLVHISQLAADRVAKTTDVVKEGQKVWVKLMGFDERGKVRLSMKVVDQETGKEIVAEKKKEEVDAE</sequence>
<name>PNP_BRUMB</name>
<feature type="chain" id="PRO_1000185725" description="Polyribonucleotide nucleotidyltransferase">
    <location>
        <begin position="1"/>
        <end position="714"/>
    </location>
</feature>
<feature type="domain" description="KH" evidence="1">
    <location>
        <begin position="555"/>
        <end position="614"/>
    </location>
</feature>
<feature type="domain" description="S1 motif" evidence="1">
    <location>
        <begin position="624"/>
        <end position="692"/>
    </location>
</feature>
<feature type="binding site" evidence="1">
    <location>
        <position position="488"/>
    </location>
    <ligand>
        <name>Mg(2+)</name>
        <dbReference type="ChEBI" id="CHEBI:18420"/>
    </ligand>
</feature>
<feature type="binding site" evidence="1">
    <location>
        <position position="494"/>
    </location>
    <ligand>
        <name>Mg(2+)</name>
        <dbReference type="ChEBI" id="CHEBI:18420"/>
    </ligand>
</feature>
<evidence type="ECO:0000255" key="1">
    <source>
        <dbReference type="HAMAP-Rule" id="MF_01595"/>
    </source>
</evidence>
<organism>
    <name type="scientific">Brucella melitensis biotype 2 (strain ATCC 23457)</name>
    <dbReference type="NCBI Taxonomy" id="546272"/>
    <lineage>
        <taxon>Bacteria</taxon>
        <taxon>Pseudomonadati</taxon>
        <taxon>Pseudomonadota</taxon>
        <taxon>Alphaproteobacteria</taxon>
        <taxon>Hyphomicrobiales</taxon>
        <taxon>Brucellaceae</taxon>
        <taxon>Brucella/Ochrobactrum group</taxon>
        <taxon>Brucella</taxon>
    </lineage>
</organism>
<accession>C0RG51</accession>
<keyword id="KW-0963">Cytoplasm</keyword>
<keyword id="KW-0460">Magnesium</keyword>
<keyword id="KW-0479">Metal-binding</keyword>
<keyword id="KW-0548">Nucleotidyltransferase</keyword>
<keyword id="KW-0694">RNA-binding</keyword>
<keyword id="KW-0808">Transferase</keyword>
<comment type="function">
    <text evidence="1">Involved in mRNA degradation. Catalyzes the phosphorolysis of single-stranded polyribonucleotides processively in the 3'- to 5'-direction.</text>
</comment>
<comment type="catalytic activity">
    <reaction evidence="1">
        <text>RNA(n+1) + phosphate = RNA(n) + a ribonucleoside 5'-diphosphate</text>
        <dbReference type="Rhea" id="RHEA:22096"/>
        <dbReference type="Rhea" id="RHEA-COMP:14527"/>
        <dbReference type="Rhea" id="RHEA-COMP:17342"/>
        <dbReference type="ChEBI" id="CHEBI:43474"/>
        <dbReference type="ChEBI" id="CHEBI:57930"/>
        <dbReference type="ChEBI" id="CHEBI:140395"/>
        <dbReference type="EC" id="2.7.7.8"/>
    </reaction>
</comment>
<comment type="cofactor">
    <cofactor evidence="1">
        <name>Mg(2+)</name>
        <dbReference type="ChEBI" id="CHEBI:18420"/>
    </cofactor>
</comment>
<comment type="subcellular location">
    <subcellularLocation>
        <location evidence="1">Cytoplasm</location>
    </subcellularLocation>
</comment>
<comment type="similarity">
    <text evidence="1">Belongs to the polyribonucleotide nucleotidyltransferase family.</text>
</comment>
<reference key="1">
    <citation type="submission" date="2009-03" db="EMBL/GenBank/DDBJ databases">
        <title>Brucella melitensis ATCC 23457 whole genome shotgun sequencing project.</title>
        <authorList>
            <person name="Setubal J.C."/>
            <person name="Boyle S."/>
            <person name="Crasta O.R."/>
            <person name="Gillespie J.J."/>
            <person name="Kenyon R.W."/>
            <person name="Lu J."/>
            <person name="Mane S."/>
            <person name="Nagrani S."/>
            <person name="Shallom J.M."/>
            <person name="Shallom S."/>
            <person name="Shukla M."/>
            <person name="Snyder E.E."/>
            <person name="Sobral B.W."/>
            <person name="Wattam A.R."/>
            <person name="Will R."/>
            <person name="Williams K."/>
            <person name="Yoo H."/>
            <person name="Munk C."/>
            <person name="Tapia R."/>
            <person name="Han C."/>
            <person name="Detter J.C."/>
            <person name="Bruce D."/>
            <person name="Brettin T.S."/>
        </authorList>
    </citation>
    <scope>NUCLEOTIDE SEQUENCE [LARGE SCALE GENOMIC DNA]</scope>
    <source>
        <strain>ATCC 23457</strain>
    </source>
</reference>
<protein>
    <recommendedName>
        <fullName evidence="1">Polyribonucleotide nucleotidyltransferase</fullName>
        <ecNumber evidence="1">2.7.7.8</ecNumber>
    </recommendedName>
    <alternativeName>
        <fullName evidence="1">Polynucleotide phosphorylase</fullName>
        <shortName evidence="1">PNPase</shortName>
    </alternativeName>
</protein>
<dbReference type="EC" id="2.7.7.8" evidence="1"/>
<dbReference type="EMBL" id="CP001488">
    <property type="protein sequence ID" value="ACO01873.1"/>
    <property type="molecule type" value="Genomic_DNA"/>
</dbReference>
<dbReference type="RefSeq" id="WP_004684585.1">
    <property type="nucleotide sequence ID" value="NC_012441.1"/>
</dbReference>
<dbReference type="SMR" id="C0RG51"/>
<dbReference type="GeneID" id="29594852"/>
<dbReference type="KEGG" id="bmi:BMEA_A2229"/>
<dbReference type="HOGENOM" id="CLU_004217_2_2_5"/>
<dbReference type="Proteomes" id="UP000001748">
    <property type="component" value="Chromosome I"/>
</dbReference>
<dbReference type="GO" id="GO:0005829">
    <property type="term" value="C:cytosol"/>
    <property type="evidence" value="ECO:0007669"/>
    <property type="project" value="TreeGrafter"/>
</dbReference>
<dbReference type="GO" id="GO:0000175">
    <property type="term" value="F:3'-5'-RNA exonuclease activity"/>
    <property type="evidence" value="ECO:0007669"/>
    <property type="project" value="TreeGrafter"/>
</dbReference>
<dbReference type="GO" id="GO:0000287">
    <property type="term" value="F:magnesium ion binding"/>
    <property type="evidence" value="ECO:0007669"/>
    <property type="project" value="UniProtKB-UniRule"/>
</dbReference>
<dbReference type="GO" id="GO:0004654">
    <property type="term" value="F:polyribonucleotide nucleotidyltransferase activity"/>
    <property type="evidence" value="ECO:0007669"/>
    <property type="project" value="UniProtKB-UniRule"/>
</dbReference>
<dbReference type="GO" id="GO:0003723">
    <property type="term" value="F:RNA binding"/>
    <property type="evidence" value="ECO:0007669"/>
    <property type="project" value="UniProtKB-UniRule"/>
</dbReference>
<dbReference type="GO" id="GO:0006402">
    <property type="term" value="P:mRNA catabolic process"/>
    <property type="evidence" value="ECO:0007669"/>
    <property type="project" value="UniProtKB-UniRule"/>
</dbReference>
<dbReference type="GO" id="GO:0006396">
    <property type="term" value="P:RNA processing"/>
    <property type="evidence" value="ECO:0007669"/>
    <property type="project" value="InterPro"/>
</dbReference>
<dbReference type="CDD" id="cd02393">
    <property type="entry name" value="KH-I_PNPase"/>
    <property type="match status" value="1"/>
</dbReference>
<dbReference type="CDD" id="cd11363">
    <property type="entry name" value="RNase_PH_PNPase_1"/>
    <property type="match status" value="1"/>
</dbReference>
<dbReference type="CDD" id="cd11364">
    <property type="entry name" value="RNase_PH_PNPase_2"/>
    <property type="match status" value="1"/>
</dbReference>
<dbReference type="CDD" id="cd04472">
    <property type="entry name" value="S1_PNPase"/>
    <property type="match status" value="1"/>
</dbReference>
<dbReference type="FunFam" id="2.40.50.140:FF:000107">
    <property type="entry name" value="Polyribonucleotide nucleotidyltransferase"/>
    <property type="match status" value="1"/>
</dbReference>
<dbReference type="FunFam" id="3.30.1370.10:FF:000001">
    <property type="entry name" value="Polyribonucleotide nucleotidyltransferase"/>
    <property type="match status" value="1"/>
</dbReference>
<dbReference type="FunFam" id="3.30.230.70:FF:000001">
    <property type="entry name" value="Polyribonucleotide nucleotidyltransferase"/>
    <property type="match status" value="1"/>
</dbReference>
<dbReference type="FunFam" id="3.30.230.70:FF:000002">
    <property type="entry name" value="Polyribonucleotide nucleotidyltransferase"/>
    <property type="match status" value="1"/>
</dbReference>
<dbReference type="Gene3D" id="3.30.230.70">
    <property type="entry name" value="GHMP Kinase, N-terminal domain"/>
    <property type="match status" value="2"/>
</dbReference>
<dbReference type="Gene3D" id="3.30.1370.10">
    <property type="entry name" value="K Homology domain, type 1"/>
    <property type="match status" value="1"/>
</dbReference>
<dbReference type="Gene3D" id="2.40.50.140">
    <property type="entry name" value="Nucleic acid-binding proteins"/>
    <property type="match status" value="1"/>
</dbReference>
<dbReference type="HAMAP" id="MF_01595">
    <property type="entry name" value="PNPase"/>
    <property type="match status" value="1"/>
</dbReference>
<dbReference type="InterPro" id="IPR001247">
    <property type="entry name" value="ExoRNase_PH_dom1"/>
</dbReference>
<dbReference type="InterPro" id="IPR015847">
    <property type="entry name" value="ExoRNase_PH_dom2"/>
</dbReference>
<dbReference type="InterPro" id="IPR036345">
    <property type="entry name" value="ExoRNase_PH_dom2_sf"/>
</dbReference>
<dbReference type="InterPro" id="IPR004087">
    <property type="entry name" value="KH_dom"/>
</dbReference>
<dbReference type="InterPro" id="IPR004088">
    <property type="entry name" value="KH_dom_type_1"/>
</dbReference>
<dbReference type="InterPro" id="IPR036612">
    <property type="entry name" value="KH_dom_type_1_sf"/>
</dbReference>
<dbReference type="InterPro" id="IPR012340">
    <property type="entry name" value="NA-bd_OB-fold"/>
</dbReference>
<dbReference type="InterPro" id="IPR012162">
    <property type="entry name" value="PNPase"/>
</dbReference>
<dbReference type="InterPro" id="IPR027408">
    <property type="entry name" value="PNPase/RNase_PH_dom_sf"/>
</dbReference>
<dbReference type="InterPro" id="IPR015848">
    <property type="entry name" value="PNPase_PH_RNA-bd_bac/org-type"/>
</dbReference>
<dbReference type="InterPro" id="IPR020568">
    <property type="entry name" value="Ribosomal_Su5_D2-typ_SF"/>
</dbReference>
<dbReference type="InterPro" id="IPR003029">
    <property type="entry name" value="S1_domain"/>
</dbReference>
<dbReference type="NCBIfam" id="TIGR03591">
    <property type="entry name" value="polynuc_phos"/>
    <property type="match status" value="1"/>
</dbReference>
<dbReference type="NCBIfam" id="NF008805">
    <property type="entry name" value="PRK11824.1"/>
    <property type="match status" value="1"/>
</dbReference>
<dbReference type="PANTHER" id="PTHR11252">
    <property type="entry name" value="POLYRIBONUCLEOTIDE NUCLEOTIDYLTRANSFERASE"/>
    <property type="match status" value="1"/>
</dbReference>
<dbReference type="PANTHER" id="PTHR11252:SF0">
    <property type="entry name" value="POLYRIBONUCLEOTIDE NUCLEOTIDYLTRANSFERASE 1, MITOCHONDRIAL"/>
    <property type="match status" value="1"/>
</dbReference>
<dbReference type="Pfam" id="PF00013">
    <property type="entry name" value="KH_1"/>
    <property type="match status" value="1"/>
</dbReference>
<dbReference type="Pfam" id="PF03726">
    <property type="entry name" value="PNPase"/>
    <property type="match status" value="1"/>
</dbReference>
<dbReference type="Pfam" id="PF01138">
    <property type="entry name" value="RNase_PH"/>
    <property type="match status" value="2"/>
</dbReference>
<dbReference type="Pfam" id="PF03725">
    <property type="entry name" value="RNase_PH_C"/>
    <property type="match status" value="2"/>
</dbReference>
<dbReference type="Pfam" id="PF00575">
    <property type="entry name" value="S1"/>
    <property type="match status" value="1"/>
</dbReference>
<dbReference type="PIRSF" id="PIRSF005499">
    <property type="entry name" value="PNPase"/>
    <property type="match status" value="1"/>
</dbReference>
<dbReference type="SMART" id="SM00322">
    <property type="entry name" value="KH"/>
    <property type="match status" value="1"/>
</dbReference>
<dbReference type="SMART" id="SM00316">
    <property type="entry name" value="S1"/>
    <property type="match status" value="1"/>
</dbReference>
<dbReference type="SUPFAM" id="SSF54791">
    <property type="entry name" value="Eukaryotic type KH-domain (KH-domain type I)"/>
    <property type="match status" value="1"/>
</dbReference>
<dbReference type="SUPFAM" id="SSF50249">
    <property type="entry name" value="Nucleic acid-binding proteins"/>
    <property type="match status" value="1"/>
</dbReference>
<dbReference type="SUPFAM" id="SSF55666">
    <property type="entry name" value="Ribonuclease PH domain 2-like"/>
    <property type="match status" value="2"/>
</dbReference>
<dbReference type="SUPFAM" id="SSF54211">
    <property type="entry name" value="Ribosomal protein S5 domain 2-like"/>
    <property type="match status" value="2"/>
</dbReference>
<dbReference type="PROSITE" id="PS50084">
    <property type="entry name" value="KH_TYPE_1"/>
    <property type="match status" value="1"/>
</dbReference>
<dbReference type="PROSITE" id="PS50126">
    <property type="entry name" value="S1"/>
    <property type="match status" value="1"/>
</dbReference>
<gene>
    <name evidence="1" type="primary">pnp</name>
    <name type="ordered locus">BMEA_A2229</name>
</gene>
<proteinExistence type="inferred from homology"/>